<accession>P0C7U5</accession>
<name>C5AR1_DANRE</name>
<proteinExistence type="inferred from homology"/>
<gene>
    <name type="primary">c5ar1</name>
</gene>
<comment type="function">
    <text evidence="2">Receptor for the chemotactic and inflammatory peptide anaphylatoxin C5a. This receptor stimulates chemotaxis, granule enzyme release and superoxide anion production.</text>
</comment>
<comment type="subcellular location">
    <subcellularLocation>
        <location evidence="1">Cell membrane</location>
        <topology evidence="1">Multi-pass membrane protein</topology>
    </subcellularLocation>
</comment>
<comment type="similarity">
    <text evidence="4">Belongs to the G-protein coupled receptor 1 family.</text>
</comment>
<feature type="chain" id="PRO_0000343795" description="C5a anaphylatoxin chemotactic receptor 1">
    <location>
        <begin position="1"/>
        <end position="346"/>
    </location>
</feature>
<feature type="topological domain" description="Extracellular" evidence="6">
    <location>
        <begin position="1"/>
        <end position="33"/>
    </location>
</feature>
<feature type="transmembrane region" description="Helical; Name=1" evidence="1">
    <location>
        <begin position="34"/>
        <end position="60"/>
    </location>
</feature>
<feature type="topological domain" description="Cytoplasmic" evidence="6">
    <location>
        <begin position="61"/>
        <end position="65"/>
    </location>
</feature>
<feature type="transmembrane region" description="Helical; Name=2" evidence="1">
    <location>
        <begin position="66"/>
        <end position="89"/>
    </location>
</feature>
<feature type="topological domain" description="Extracellular" evidence="6">
    <location>
        <begin position="90"/>
        <end position="106"/>
    </location>
</feature>
<feature type="transmembrane region" description="Helical; Name=3" evidence="1">
    <location>
        <begin position="107"/>
        <end position="128"/>
    </location>
</feature>
<feature type="topological domain" description="Cytoplasmic" evidence="6">
    <location>
        <begin position="129"/>
        <end position="149"/>
    </location>
</feature>
<feature type="transmembrane region" description="Helical; Name=4" evidence="1">
    <location>
        <begin position="150"/>
        <end position="170"/>
    </location>
</feature>
<feature type="topological domain" description="Extracellular" evidence="6">
    <location>
        <begin position="171"/>
        <end position="194"/>
    </location>
</feature>
<feature type="transmembrane region" description="Helical; Name=5" evidence="1">
    <location>
        <begin position="195"/>
        <end position="220"/>
    </location>
</feature>
<feature type="topological domain" description="Cytoplasmic" evidence="6">
    <location>
        <begin position="221"/>
        <end position="238"/>
    </location>
</feature>
<feature type="transmembrane region" description="Helical; Name=6" evidence="1">
    <location>
        <begin position="239"/>
        <end position="261"/>
    </location>
</feature>
<feature type="topological domain" description="Extracellular" evidence="6">
    <location>
        <begin position="262"/>
        <end position="279"/>
    </location>
</feature>
<feature type="transmembrane region" description="Helical; Name=7" evidence="1">
    <location>
        <begin position="280"/>
        <end position="300"/>
    </location>
</feature>
<feature type="topological domain" description="Cytoplasmic" evidence="6">
    <location>
        <begin position="301"/>
        <end position="346"/>
    </location>
</feature>
<feature type="region of interest" description="Disordered" evidence="5">
    <location>
        <begin position="323"/>
        <end position="346"/>
    </location>
</feature>
<feature type="compositionally biased region" description="Polar residues" evidence="5">
    <location>
        <begin position="327"/>
        <end position="338"/>
    </location>
</feature>
<feature type="glycosylation site" description="N-linked (GlcNAc...) asparagine" evidence="3">
    <location>
        <position position="4"/>
    </location>
</feature>
<feature type="glycosylation site" description="N-linked (GlcNAc...) asparagine" evidence="3">
    <location>
        <position position="15"/>
    </location>
</feature>
<feature type="disulfide bond" evidence="4">
    <location>
        <begin position="105"/>
        <end position="183"/>
    </location>
</feature>
<reference key="1">
    <citation type="journal article" date="2013" name="Nature">
        <title>The zebrafish reference genome sequence and its relationship to the human genome.</title>
        <authorList>
            <person name="Howe K."/>
            <person name="Clark M.D."/>
            <person name="Torroja C.F."/>
            <person name="Torrance J."/>
            <person name="Berthelot C."/>
            <person name="Muffato M."/>
            <person name="Collins J.E."/>
            <person name="Humphray S."/>
            <person name="McLaren K."/>
            <person name="Matthews L."/>
            <person name="McLaren S."/>
            <person name="Sealy I."/>
            <person name="Caccamo M."/>
            <person name="Churcher C."/>
            <person name="Scott C."/>
            <person name="Barrett J.C."/>
            <person name="Koch R."/>
            <person name="Rauch G.J."/>
            <person name="White S."/>
            <person name="Chow W."/>
            <person name="Kilian B."/>
            <person name="Quintais L.T."/>
            <person name="Guerra-Assuncao J.A."/>
            <person name="Zhou Y."/>
            <person name="Gu Y."/>
            <person name="Yen J."/>
            <person name="Vogel J.H."/>
            <person name="Eyre T."/>
            <person name="Redmond S."/>
            <person name="Banerjee R."/>
            <person name="Chi J."/>
            <person name="Fu B."/>
            <person name="Langley E."/>
            <person name="Maguire S.F."/>
            <person name="Laird G.K."/>
            <person name="Lloyd D."/>
            <person name="Kenyon E."/>
            <person name="Donaldson S."/>
            <person name="Sehra H."/>
            <person name="Almeida-King J."/>
            <person name="Loveland J."/>
            <person name="Trevanion S."/>
            <person name="Jones M."/>
            <person name="Quail M."/>
            <person name="Willey D."/>
            <person name="Hunt A."/>
            <person name="Burton J."/>
            <person name="Sims S."/>
            <person name="McLay K."/>
            <person name="Plumb B."/>
            <person name="Davis J."/>
            <person name="Clee C."/>
            <person name="Oliver K."/>
            <person name="Clark R."/>
            <person name="Riddle C."/>
            <person name="Elliot D."/>
            <person name="Threadgold G."/>
            <person name="Harden G."/>
            <person name="Ware D."/>
            <person name="Begum S."/>
            <person name="Mortimore B."/>
            <person name="Kerry G."/>
            <person name="Heath P."/>
            <person name="Phillimore B."/>
            <person name="Tracey A."/>
            <person name="Corby N."/>
            <person name="Dunn M."/>
            <person name="Johnson C."/>
            <person name="Wood J."/>
            <person name="Clark S."/>
            <person name="Pelan S."/>
            <person name="Griffiths G."/>
            <person name="Smith M."/>
            <person name="Glithero R."/>
            <person name="Howden P."/>
            <person name="Barker N."/>
            <person name="Lloyd C."/>
            <person name="Stevens C."/>
            <person name="Harley J."/>
            <person name="Holt K."/>
            <person name="Panagiotidis G."/>
            <person name="Lovell J."/>
            <person name="Beasley H."/>
            <person name="Henderson C."/>
            <person name="Gordon D."/>
            <person name="Auger K."/>
            <person name="Wright D."/>
            <person name="Collins J."/>
            <person name="Raisen C."/>
            <person name="Dyer L."/>
            <person name="Leung K."/>
            <person name="Robertson L."/>
            <person name="Ambridge K."/>
            <person name="Leongamornlert D."/>
            <person name="McGuire S."/>
            <person name="Gilderthorp R."/>
            <person name="Griffiths C."/>
            <person name="Manthravadi D."/>
            <person name="Nichol S."/>
            <person name="Barker G."/>
            <person name="Whitehead S."/>
            <person name="Kay M."/>
            <person name="Brown J."/>
            <person name="Murnane C."/>
            <person name="Gray E."/>
            <person name="Humphries M."/>
            <person name="Sycamore N."/>
            <person name="Barker D."/>
            <person name="Saunders D."/>
            <person name="Wallis J."/>
            <person name="Babbage A."/>
            <person name="Hammond S."/>
            <person name="Mashreghi-Mohammadi M."/>
            <person name="Barr L."/>
            <person name="Martin S."/>
            <person name="Wray P."/>
            <person name="Ellington A."/>
            <person name="Matthews N."/>
            <person name="Ellwood M."/>
            <person name="Woodmansey R."/>
            <person name="Clark G."/>
            <person name="Cooper J."/>
            <person name="Tromans A."/>
            <person name="Grafham D."/>
            <person name="Skuce C."/>
            <person name="Pandian R."/>
            <person name="Andrews R."/>
            <person name="Harrison E."/>
            <person name="Kimberley A."/>
            <person name="Garnett J."/>
            <person name="Fosker N."/>
            <person name="Hall R."/>
            <person name="Garner P."/>
            <person name="Kelly D."/>
            <person name="Bird C."/>
            <person name="Palmer S."/>
            <person name="Gehring I."/>
            <person name="Berger A."/>
            <person name="Dooley C.M."/>
            <person name="Ersan-Urun Z."/>
            <person name="Eser C."/>
            <person name="Geiger H."/>
            <person name="Geisler M."/>
            <person name="Karotki L."/>
            <person name="Kirn A."/>
            <person name="Konantz J."/>
            <person name="Konantz M."/>
            <person name="Oberlander M."/>
            <person name="Rudolph-Geiger S."/>
            <person name="Teucke M."/>
            <person name="Lanz C."/>
            <person name="Raddatz G."/>
            <person name="Osoegawa K."/>
            <person name="Zhu B."/>
            <person name="Rapp A."/>
            <person name="Widaa S."/>
            <person name="Langford C."/>
            <person name="Yang F."/>
            <person name="Schuster S.C."/>
            <person name="Carter N.P."/>
            <person name="Harrow J."/>
            <person name="Ning Z."/>
            <person name="Herrero J."/>
            <person name="Searle S.M."/>
            <person name="Enright A."/>
            <person name="Geisler R."/>
            <person name="Plasterk R.H."/>
            <person name="Lee C."/>
            <person name="Westerfield M."/>
            <person name="de Jong P.J."/>
            <person name="Zon L.I."/>
            <person name="Postlethwait J.H."/>
            <person name="Nusslein-Volhard C."/>
            <person name="Hubbard T.J."/>
            <person name="Roest Crollius H."/>
            <person name="Rogers J."/>
            <person name="Stemple D.L."/>
        </authorList>
    </citation>
    <scope>NUCLEOTIDE SEQUENCE [LARGE SCALE GENOMIC DNA]</scope>
    <source>
        <strain>Tuebingen</strain>
    </source>
</reference>
<sequence length="346" mass="39115">MDDNNSDWTSYDFGNDTIPSPNEISLSHIGTRHWITLVCYGIVFLLGVPGNALVVWVTGFRMPNSVNAQWFLNLAIADLLCCLSLPILMVPLAQDQHWPFGALACKLFSGIFYMMMYCSVLLLVVISLDRFLLVTKPVWCQNNRQPRQARILCFIIWILGLLGSSPYFAHMEIQHHSETKTVCTGSYSSLGHAWAITIIRSFLFFLLPFLIICISHWKVYHMTSSGRRQRDKSSRTLRVILALVLGFFLCWTPLHIVDLLILVSDQPSERFEVNLNLAHVLTLCLAYINSCLNPLLYVCLGRGFKENLISSLRSVLHFASEAPTHGPSMTTNSKSTTDGVFREKPV</sequence>
<keyword id="KW-1003">Cell membrane</keyword>
<keyword id="KW-0145">Chemotaxis</keyword>
<keyword id="KW-1015">Disulfide bond</keyword>
<keyword id="KW-0297">G-protein coupled receptor</keyword>
<keyword id="KW-0325">Glycoprotein</keyword>
<keyword id="KW-0472">Membrane</keyword>
<keyword id="KW-0675">Receptor</keyword>
<keyword id="KW-1185">Reference proteome</keyword>
<keyword id="KW-0807">Transducer</keyword>
<keyword id="KW-0812">Transmembrane</keyword>
<keyword id="KW-1133">Transmembrane helix</keyword>
<protein>
    <recommendedName>
        <fullName>C5a anaphylatoxin chemotactic receptor 1</fullName>
    </recommendedName>
    <alternativeName>
        <fullName>C5a anaphylatoxin chemotactic receptor</fullName>
        <shortName>C5a-R</shortName>
        <shortName>C5aR</shortName>
    </alternativeName>
</protein>
<organism>
    <name type="scientific">Danio rerio</name>
    <name type="common">Zebrafish</name>
    <name type="synonym">Brachydanio rerio</name>
    <dbReference type="NCBI Taxonomy" id="7955"/>
    <lineage>
        <taxon>Eukaryota</taxon>
        <taxon>Metazoa</taxon>
        <taxon>Chordata</taxon>
        <taxon>Craniata</taxon>
        <taxon>Vertebrata</taxon>
        <taxon>Euteleostomi</taxon>
        <taxon>Actinopterygii</taxon>
        <taxon>Neopterygii</taxon>
        <taxon>Teleostei</taxon>
        <taxon>Ostariophysi</taxon>
        <taxon>Cypriniformes</taxon>
        <taxon>Danionidae</taxon>
        <taxon>Danioninae</taxon>
        <taxon>Danio</taxon>
    </lineage>
</organism>
<dbReference type="EMBL" id="CAAK04023738">
    <property type="status" value="NOT_ANNOTATED_CDS"/>
    <property type="molecule type" value="Genomic_DNA"/>
</dbReference>
<dbReference type="RefSeq" id="NP_001410961.1">
    <property type="nucleotide sequence ID" value="NM_001424032.1"/>
</dbReference>
<dbReference type="RefSeq" id="XP_005159331.1">
    <property type="nucleotide sequence ID" value="XM_005159274.3"/>
</dbReference>
<dbReference type="SMR" id="P0C7U5"/>
<dbReference type="FunCoup" id="P0C7U5">
    <property type="interactions" value="4"/>
</dbReference>
<dbReference type="STRING" id="7955.ENSDARP00000059000"/>
<dbReference type="GlyCosmos" id="P0C7U5">
    <property type="glycosylation" value="2 sites, No reported glycans"/>
</dbReference>
<dbReference type="PaxDb" id="7955-ENSDARP00000059000"/>
<dbReference type="Ensembl" id="ENSDART00000059001">
    <property type="protein sequence ID" value="ENSDARP00000059000"/>
    <property type="gene ID" value="ENSDARG00000040319"/>
</dbReference>
<dbReference type="GeneID" id="100000959"/>
<dbReference type="eggNOG" id="ENOG502R35Z">
    <property type="taxonomic scope" value="Eukaryota"/>
</dbReference>
<dbReference type="HOGENOM" id="CLU_009579_8_0_1"/>
<dbReference type="InParanoid" id="P0C7U5"/>
<dbReference type="OMA" id="VAVWCLA"/>
<dbReference type="OrthoDB" id="9835842at2759"/>
<dbReference type="PhylomeDB" id="P0C7U5"/>
<dbReference type="TreeFam" id="TF330976"/>
<dbReference type="PRO" id="PR:P0C7U5"/>
<dbReference type="Proteomes" id="UP000000437">
    <property type="component" value="Chromosome 18"/>
</dbReference>
<dbReference type="Bgee" id="ENSDARG00000040319">
    <property type="expression patterns" value="Expressed in granulocyte and 10 other cell types or tissues"/>
</dbReference>
<dbReference type="GO" id="GO:0045177">
    <property type="term" value="C:apical part of cell"/>
    <property type="evidence" value="ECO:0000250"/>
    <property type="project" value="UniProtKB"/>
</dbReference>
<dbReference type="GO" id="GO:0016323">
    <property type="term" value="C:basolateral plasma membrane"/>
    <property type="evidence" value="ECO:0000250"/>
    <property type="project" value="UniProtKB"/>
</dbReference>
<dbReference type="GO" id="GO:0005886">
    <property type="term" value="C:plasma membrane"/>
    <property type="evidence" value="ECO:0000318"/>
    <property type="project" value="GO_Central"/>
</dbReference>
<dbReference type="GO" id="GO:0004878">
    <property type="term" value="F:complement component C5a receptor activity"/>
    <property type="evidence" value="ECO:0000250"/>
    <property type="project" value="UniProtKB"/>
</dbReference>
<dbReference type="GO" id="GO:0004930">
    <property type="term" value="F:G protein-coupled receptor activity"/>
    <property type="evidence" value="ECO:0000318"/>
    <property type="project" value="GO_Central"/>
</dbReference>
<dbReference type="GO" id="GO:0006935">
    <property type="term" value="P:chemotaxis"/>
    <property type="evidence" value="ECO:0007669"/>
    <property type="project" value="UniProtKB-KW"/>
</dbReference>
<dbReference type="GO" id="GO:0002430">
    <property type="term" value="P:complement receptor mediated signaling pathway"/>
    <property type="evidence" value="ECO:0000318"/>
    <property type="project" value="GO_Central"/>
</dbReference>
<dbReference type="GO" id="GO:0006954">
    <property type="term" value="P:inflammatory response"/>
    <property type="evidence" value="ECO:0000318"/>
    <property type="project" value="GO_Central"/>
</dbReference>
<dbReference type="GO" id="GO:0042789">
    <property type="term" value="P:mRNA transcription by RNA polymerase II"/>
    <property type="evidence" value="ECO:0000250"/>
    <property type="project" value="UniProtKB"/>
</dbReference>
<dbReference type="GO" id="GO:0007200">
    <property type="term" value="P:phospholipase C-activating G protein-coupled receptor signaling pathway"/>
    <property type="evidence" value="ECO:0000318"/>
    <property type="project" value="GO_Central"/>
</dbReference>
<dbReference type="GO" id="GO:0007204">
    <property type="term" value="P:positive regulation of cytosolic calcium ion concentration"/>
    <property type="evidence" value="ECO:0000318"/>
    <property type="project" value="GO_Central"/>
</dbReference>
<dbReference type="GO" id="GO:0050679">
    <property type="term" value="P:positive regulation of epithelial cell proliferation"/>
    <property type="evidence" value="ECO:0000250"/>
    <property type="project" value="UniProtKB"/>
</dbReference>
<dbReference type="GO" id="GO:0070374">
    <property type="term" value="P:positive regulation of ERK1 and ERK2 cascade"/>
    <property type="evidence" value="ECO:0000250"/>
    <property type="project" value="UniProtKB"/>
</dbReference>
<dbReference type="CDD" id="cd15114">
    <property type="entry name" value="7tmA_C5aR"/>
    <property type="match status" value="1"/>
</dbReference>
<dbReference type="FunFam" id="1.20.1070.10:FF:000034">
    <property type="entry name" value="G-protein coupled receptor 1"/>
    <property type="match status" value="1"/>
</dbReference>
<dbReference type="Gene3D" id="1.20.1070.10">
    <property type="entry name" value="Rhodopsin 7-helix transmembrane proteins"/>
    <property type="match status" value="1"/>
</dbReference>
<dbReference type="InterPro" id="IPR000826">
    <property type="entry name" value="Formyl_rcpt-rel"/>
</dbReference>
<dbReference type="InterPro" id="IPR000276">
    <property type="entry name" value="GPCR_Rhodpsn"/>
</dbReference>
<dbReference type="InterPro" id="IPR017452">
    <property type="entry name" value="GPCR_Rhodpsn_7TM"/>
</dbReference>
<dbReference type="PANTHER" id="PTHR24225:SF56">
    <property type="entry name" value="C5A ANAPHYLATOXIN CHEMOTACTIC RECEPTOR 1"/>
    <property type="match status" value="1"/>
</dbReference>
<dbReference type="PANTHER" id="PTHR24225">
    <property type="entry name" value="CHEMOTACTIC RECEPTOR"/>
    <property type="match status" value="1"/>
</dbReference>
<dbReference type="Pfam" id="PF00001">
    <property type="entry name" value="7tm_1"/>
    <property type="match status" value="1"/>
</dbReference>
<dbReference type="PRINTS" id="PR00526">
    <property type="entry name" value="FMETLEUPHER"/>
</dbReference>
<dbReference type="PRINTS" id="PR00237">
    <property type="entry name" value="GPCRRHODOPSN"/>
</dbReference>
<dbReference type="SUPFAM" id="SSF81321">
    <property type="entry name" value="Family A G protein-coupled receptor-like"/>
    <property type="match status" value="1"/>
</dbReference>
<dbReference type="PROSITE" id="PS00237">
    <property type="entry name" value="G_PROTEIN_RECEP_F1_1"/>
    <property type="match status" value="1"/>
</dbReference>
<dbReference type="PROSITE" id="PS50262">
    <property type="entry name" value="G_PROTEIN_RECEP_F1_2"/>
    <property type="match status" value="1"/>
</dbReference>
<evidence type="ECO:0000250" key="1">
    <source>
        <dbReference type="UniProtKB" id="P21730"/>
    </source>
</evidence>
<evidence type="ECO:0000250" key="2">
    <source>
        <dbReference type="UniProtKB" id="Q6UNA4"/>
    </source>
</evidence>
<evidence type="ECO:0000255" key="3"/>
<evidence type="ECO:0000255" key="4">
    <source>
        <dbReference type="PROSITE-ProRule" id="PRU00521"/>
    </source>
</evidence>
<evidence type="ECO:0000256" key="5">
    <source>
        <dbReference type="SAM" id="MobiDB-lite"/>
    </source>
</evidence>
<evidence type="ECO:0000305" key="6"/>